<evidence type="ECO:0000250" key="1"/>
<evidence type="ECO:0000305" key="2"/>
<organism>
    <name type="scientific">Saccharolobus solfataricus (strain ATCC 35092 / DSM 1617 / JCM 11322 / P2)</name>
    <name type="common">Sulfolobus solfataricus</name>
    <dbReference type="NCBI Taxonomy" id="273057"/>
    <lineage>
        <taxon>Archaea</taxon>
        <taxon>Thermoproteota</taxon>
        <taxon>Thermoprotei</taxon>
        <taxon>Sulfolobales</taxon>
        <taxon>Sulfolobaceae</taxon>
        <taxon>Saccharolobus</taxon>
    </lineage>
</organism>
<comment type="function">
    <text evidence="1">Catalyzes the NAD-dependent oxidative cleavage of spermidine and the subsequent transfer of the butylamine moiety of spermidine to the epsilon-amino group of a specific lysine residue of the eIF-5A precursor protein to form the intermediate deoxyhypusine residue.</text>
</comment>
<comment type="catalytic activity">
    <reaction>
        <text>[eIF5A protein]-L-lysine + spermidine = [eIF5A protein]-deoxyhypusine + propane-1,3-diamine</text>
        <dbReference type="Rhea" id="RHEA:33299"/>
        <dbReference type="Rhea" id="RHEA-COMP:10143"/>
        <dbReference type="Rhea" id="RHEA-COMP:10144"/>
        <dbReference type="ChEBI" id="CHEBI:29969"/>
        <dbReference type="ChEBI" id="CHEBI:57484"/>
        <dbReference type="ChEBI" id="CHEBI:57834"/>
        <dbReference type="ChEBI" id="CHEBI:82657"/>
        <dbReference type="EC" id="2.5.1.46"/>
    </reaction>
</comment>
<comment type="cofactor">
    <cofactor evidence="1">
        <name>NAD(+)</name>
        <dbReference type="ChEBI" id="CHEBI:57540"/>
    </cofactor>
</comment>
<comment type="pathway">
    <text>Protein modification; eIF5A hypusination.</text>
</comment>
<comment type="similarity">
    <text evidence="2">Belongs to the deoxyhypusine synthase family.</text>
</comment>
<reference key="1">
    <citation type="journal article" date="2001" name="Proc. Natl. Acad. Sci. U.S.A.">
        <title>The complete genome of the crenarchaeon Sulfolobus solfataricus P2.</title>
        <authorList>
            <person name="She Q."/>
            <person name="Singh R.K."/>
            <person name="Confalonieri F."/>
            <person name="Zivanovic Y."/>
            <person name="Allard G."/>
            <person name="Awayez M.J."/>
            <person name="Chan-Weiher C.C.-Y."/>
            <person name="Clausen I.G."/>
            <person name="Curtis B.A."/>
            <person name="De Moors A."/>
            <person name="Erauso G."/>
            <person name="Fletcher C."/>
            <person name="Gordon P.M.K."/>
            <person name="Heikamp-de Jong I."/>
            <person name="Jeffries A.C."/>
            <person name="Kozera C.J."/>
            <person name="Medina N."/>
            <person name="Peng X."/>
            <person name="Thi-Ngoc H.P."/>
            <person name="Redder P."/>
            <person name="Schenk M.E."/>
            <person name="Theriault C."/>
            <person name="Tolstrup N."/>
            <person name="Charlebois R.L."/>
            <person name="Doolittle W.F."/>
            <person name="Duguet M."/>
            <person name="Gaasterland T."/>
            <person name="Garrett R.A."/>
            <person name="Ragan M.A."/>
            <person name="Sensen C.W."/>
            <person name="Van der Oost J."/>
        </authorList>
    </citation>
    <scope>NUCLEOTIDE SEQUENCE [LARGE SCALE GENOMIC DNA]</scope>
    <source>
        <strain>ATCC 35092 / DSM 1617 / JCM 11322 / P2</strain>
    </source>
</reference>
<feature type="chain" id="PRO_0000134508" description="Probable deoxyhypusine synthase">
    <location>
        <begin position="1"/>
        <end position="312"/>
    </location>
</feature>
<feature type="active site" description="Nucleophile" evidence="1">
    <location>
        <position position="285"/>
    </location>
</feature>
<protein>
    <recommendedName>
        <fullName>Probable deoxyhypusine synthase</fullName>
        <shortName>DHS</shortName>
        <ecNumber>2.5.1.46</ecNumber>
    </recommendedName>
</protein>
<accession>Q97ZF1</accession>
<name>DHYS_SACS2</name>
<sequence length="312" mass="35050">MINREDLLKNPVEDITLSDLKKYNDIVSVFDKIYGFSSEGIVNGSKILKEMIKNADLRFLSFTANLVSTGLRGLFADLIKKGYFNIVVTTGGTIDHDLARSFGGVYYKGSFDIDDTMLKDLEIHRLGNVLVPFESYGKVIEDVVRKFLPEITKDRKEISAYELLWEFGKRITDSNSILRAAYDKNVPIIVPGILDGSFGTNLFIQSQFLNFRINLFEDMRLIKDLIFSSKKSGALIIGGGISKHHTIWWNQFKDGLNYAIYITTAQEYDGSLSGAKPREAISWNKIRPDAKHVTIYGDATIIVPILAASLLS</sequence>
<gene>
    <name type="primary">dys</name>
    <name type="ordered locus">SSO0967</name>
</gene>
<keyword id="KW-0386">Hypusine biosynthesis</keyword>
<keyword id="KW-0520">NAD</keyword>
<keyword id="KW-1185">Reference proteome</keyword>
<keyword id="KW-0808">Transferase</keyword>
<proteinExistence type="inferred from homology"/>
<dbReference type="EC" id="2.5.1.46"/>
<dbReference type="EMBL" id="AE006641">
    <property type="protein sequence ID" value="AAK41241.1"/>
    <property type="molecule type" value="Genomic_DNA"/>
</dbReference>
<dbReference type="PIR" id="B90248">
    <property type="entry name" value="B90248"/>
</dbReference>
<dbReference type="RefSeq" id="WP_009992414.1">
    <property type="nucleotide sequence ID" value="NC_002754.1"/>
</dbReference>
<dbReference type="SMR" id="Q97ZF1"/>
<dbReference type="FunCoup" id="Q97ZF1">
    <property type="interactions" value="217"/>
</dbReference>
<dbReference type="STRING" id="273057.SSO0967"/>
<dbReference type="PaxDb" id="273057-SSO0967"/>
<dbReference type="EnsemblBacteria" id="AAK41241">
    <property type="protein sequence ID" value="AAK41241"/>
    <property type="gene ID" value="SSO0967"/>
</dbReference>
<dbReference type="KEGG" id="sso:SSO0967"/>
<dbReference type="PATRIC" id="fig|273057.12.peg.966"/>
<dbReference type="eggNOG" id="arCOG04142">
    <property type="taxonomic scope" value="Archaea"/>
</dbReference>
<dbReference type="HOGENOM" id="CLU_039781_1_0_2"/>
<dbReference type="InParanoid" id="Q97ZF1"/>
<dbReference type="PhylomeDB" id="Q97ZF1"/>
<dbReference type="BRENDA" id="2.5.1.46">
    <property type="organism ID" value="6163"/>
</dbReference>
<dbReference type="UniPathway" id="UPA00354"/>
<dbReference type="Proteomes" id="UP000001974">
    <property type="component" value="Chromosome"/>
</dbReference>
<dbReference type="GO" id="GO:0005737">
    <property type="term" value="C:cytoplasm"/>
    <property type="evidence" value="ECO:0000318"/>
    <property type="project" value="GO_Central"/>
</dbReference>
<dbReference type="GO" id="GO:0034038">
    <property type="term" value="F:deoxyhypusine synthase activity"/>
    <property type="evidence" value="ECO:0000318"/>
    <property type="project" value="GO_Central"/>
</dbReference>
<dbReference type="GO" id="GO:0008216">
    <property type="term" value="P:spermidine metabolic process"/>
    <property type="evidence" value="ECO:0000318"/>
    <property type="project" value="GO_Central"/>
</dbReference>
<dbReference type="FunFam" id="3.40.910.10:FF:000007">
    <property type="entry name" value="Probable deoxyhypusine synthase"/>
    <property type="match status" value="1"/>
</dbReference>
<dbReference type="Gene3D" id="3.40.910.10">
    <property type="entry name" value="Deoxyhypusine synthase"/>
    <property type="match status" value="1"/>
</dbReference>
<dbReference type="HAMAP" id="MF_00153">
    <property type="entry name" value="DHS"/>
    <property type="match status" value="1"/>
</dbReference>
<dbReference type="InterPro" id="IPR022899">
    <property type="entry name" value="Deoxyhypus_synthase_arc"/>
</dbReference>
<dbReference type="InterPro" id="IPR002773">
    <property type="entry name" value="Deoxyhypusine_synthase"/>
</dbReference>
<dbReference type="InterPro" id="IPR036982">
    <property type="entry name" value="Deoxyhypusine_synthase_sf"/>
</dbReference>
<dbReference type="InterPro" id="IPR029035">
    <property type="entry name" value="DHS-like_NAD/FAD-binding_dom"/>
</dbReference>
<dbReference type="NCBIfam" id="NF002294">
    <property type="entry name" value="PRK01221.1"/>
    <property type="match status" value="1"/>
</dbReference>
<dbReference type="PANTHER" id="PTHR11703">
    <property type="entry name" value="DEOXYHYPUSINE SYNTHASE"/>
    <property type="match status" value="1"/>
</dbReference>
<dbReference type="PANTHER" id="PTHR11703:SF0">
    <property type="entry name" value="DEOXYHYPUSINE SYNTHASE"/>
    <property type="match status" value="1"/>
</dbReference>
<dbReference type="Pfam" id="PF01916">
    <property type="entry name" value="DS"/>
    <property type="match status" value="1"/>
</dbReference>
<dbReference type="SUPFAM" id="SSF52467">
    <property type="entry name" value="DHS-like NAD/FAD-binding domain"/>
    <property type="match status" value="1"/>
</dbReference>